<evidence type="ECO:0000255" key="1">
    <source>
        <dbReference type="HAMAP-Rule" id="MF_01598"/>
    </source>
</evidence>
<proteinExistence type="inferred from homology"/>
<organism>
    <name type="scientific">Shigella dysenteriae serotype 1 (strain Sd197)</name>
    <dbReference type="NCBI Taxonomy" id="300267"/>
    <lineage>
        <taxon>Bacteria</taxon>
        <taxon>Pseudomonadati</taxon>
        <taxon>Pseudomonadota</taxon>
        <taxon>Gammaproteobacteria</taxon>
        <taxon>Enterobacterales</taxon>
        <taxon>Enterobacteriaceae</taxon>
        <taxon>Shigella</taxon>
    </lineage>
</organism>
<protein>
    <recommendedName>
        <fullName evidence="1">Spermidine export protein MdtJ</fullName>
    </recommendedName>
</protein>
<gene>
    <name evidence="1" type="primary">mdtJ</name>
    <name type="ordered locus">SDY_1553</name>
</gene>
<dbReference type="EMBL" id="CP000034">
    <property type="protein sequence ID" value="ABB61689.1"/>
    <property type="molecule type" value="Genomic_DNA"/>
</dbReference>
<dbReference type="RefSeq" id="WP_000276149.1">
    <property type="nucleotide sequence ID" value="NC_007606.1"/>
</dbReference>
<dbReference type="RefSeq" id="YP_403180.1">
    <property type="nucleotide sequence ID" value="NC_007606.1"/>
</dbReference>
<dbReference type="SMR" id="Q32G66"/>
<dbReference type="STRING" id="300267.SDY_1553"/>
<dbReference type="EnsemblBacteria" id="ABB61689">
    <property type="protein sequence ID" value="ABB61689"/>
    <property type="gene ID" value="SDY_1553"/>
</dbReference>
<dbReference type="GeneID" id="93775748"/>
<dbReference type="KEGG" id="sdy:SDY_1553"/>
<dbReference type="PATRIC" id="fig|300267.13.peg.1862"/>
<dbReference type="HOGENOM" id="CLU_133067_0_0_6"/>
<dbReference type="Proteomes" id="UP000002716">
    <property type="component" value="Chromosome"/>
</dbReference>
<dbReference type="GO" id="GO:0005886">
    <property type="term" value="C:plasma membrane"/>
    <property type="evidence" value="ECO:0007669"/>
    <property type="project" value="UniProtKB-SubCell"/>
</dbReference>
<dbReference type="GO" id="GO:0015199">
    <property type="term" value="F:amino-acid betaine transmembrane transporter activity"/>
    <property type="evidence" value="ECO:0007669"/>
    <property type="project" value="TreeGrafter"/>
</dbReference>
<dbReference type="GO" id="GO:0015297">
    <property type="term" value="F:antiporter activity"/>
    <property type="evidence" value="ECO:0007669"/>
    <property type="project" value="TreeGrafter"/>
</dbReference>
<dbReference type="GO" id="GO:0015220">
    <property type="term" value="F:choline transmembrane transporter activity"/>
    <property type="evidence" value="ECO:0007669"/>
    <property type="project" value="TreeGrafter"/>
</dbReference>
<dbReference type="GO" id="GO:0015606">
    <property type="term" value="F:spermidine transmembrane transporter activity"/>
    <property type="evidence" value="ECO:0007669"/>
    <property type="project" value="UniProtKB-UniRule"/>
</dbReference>
<dbReference type="GO" id="GO:0031460">
    <property type="term" value="P:glycine betaine transport"/>
    <property type="evidence" value="ECO:0007669"/>
    <property type="project" value="TreeGrafter"/>
</dbReference>
<dbReference type="FunFam" id="1.10.3730.20:FF:000001">
    <property type="entry name" value="Quaternary ammonium compound resistance transporter SugE"/>
    <property type="match status" value="1"/>
</dbReference>
<dbReference type="Gene3D" id="1.10.3730.20">
    <property type="match status" value="1"/>
</dbReference>
<dbReference type="HAMAP" id="MF_01598">
    <property type="entry name" value="MdtJ"/>
    <property type="match status" value="1"/>
</dbReference>
<dbReference type="InterPro" id="IPR000390">
    <property type="entry name" value="Small_drug/metabolite_transptr"/>
</dbReference>
<dbReference type="InterPro" id="IPR045324">
    <property type="entry name" value="Small_multidrug_res"/>
</dbReference>
<dbReference type="InterPro" id="IPR023740">
    <property type="entry name" value="Spermidine_export_MdtJ"/>
</dbReference>
<dbReference type="NCBIfam" id="NF007767">
    <property type="entry name" value="PRK10452.1"/>
    <property type="match status" value="1"/>
</dbReference>
<dbReference type="PANTHER" id="PTHR30561">
    <property type="entry name" value="SMR FAMILY PROTON-DEPENDENT DRUG EFFLUX TRANSPORTER SUGE"/>
    <property type="match status" value="1"/>
</dbReference>
<dbReference type="PANTHER" id="PTHR30561:SF2">
    <property type="entry name" value="SPERMIDINE EXPORT PROTEIN MDTJ"/>
    <property type="match status" value="1"/>
</dbReference>
<dbReference type="Pfam" id="PF00893">
    <property type="entry name" value="Multi_Drug_Res"/>
    <property type="match status" value="1"/>
</dbReference>
<dbReference type="SUPFAM" id="SSF103481">
    <property type="entry name" value="Multidrug resistance efflux transporter EmrE"/>
    <property type="match status" value="1"/>
</dbReference>
<sequence>MYIYWILLGLAIATEITGTLSMKWASVSEGNGGFILMLVMISLSYIFLSFAVKKIALGVAYALWEGIGILFITLFSVLLFDESLSLMKIAGLTTLVAGIVLIKSGTRKARKPELEVNHGAV</sequence>
<comment type="function">
    <text evidence="1">Catalyzes the excretion of spermidine.</text>
</comment>
<comment type="subunit">
    <text evidence="1">Forms a complex with MdtI.</text>
</comment>
<comment type="subcellular location">
    <subcellularLocation>
        <location evidence="1">Cell inner membrane</location>
        <topology evidence="1">Multi-pass membrane protein</topology>
    </subcellularLocation>
</comment>
<comment type="similarity">
    <text evidence="1">Belongs to the drug/metabolite transporter (DMT) superfamily. Small multidrug resistance (SMR) (TC 2.A.7.1) family. MdtJ subfamily.</text>
</comment>
<name>MDTJ_SHIDS</name>
<keyword id="KW-0997">Cell inner membrane</keyword>
<keyword id="KW-1003">Cell membrane</keyword>
<keyword id="KW-0472">Membrane</keyword>
<keyword id="KW-1185">Reference proteome</keyword>
<keyword id="KW-0812">Transmembrane</keyword>
<keyword id="KW-1133">Transmembrane helix</keyword>
<keyword id="KW-0813">Transport</keyword>
<feature type="chain" id="PRO_0000331181" description="Spermidine export protein MdtJ">
    <location>
        <begin position="1"/>
        <end position="121"/>
    </location>
</feature>
<feature type="transmembrane region" description="Helical" evidence="1">
    <location>
        <begin position="1"/>
        <end position="21"/>
    </location>
</feature>
<feature type="transmembrane region" description="Helical" evidence="1">
    <location>
        <begin position="32"/>
        <end position="52"/>
    </location>
</feature>
<feature type="transmembrane region" description="Helical" evidence="1">
    <location>
        <begin position="55"/>
        <end position="75"/>
    </location>
</feature>
<feature type="transmembrane region" description="Helical" evidence="1">
    <location>
        <begin position="82"/>
        <end position="102"/>
    </location>
</feature>
<accession>Q32G66</accession>
<reference key="1">
    <citation type="journal article" date="2005" name="Nucleic Acids Res.">
        <title>Genome dynamics and diversity of Shigella species, the etiologic agents of bacillary dysentery.</title>
        <authorList>
            <person name="Yang F."/>
            <person name="Yang J."/>
            <person name="Zhang X."/>
            <person name="Chen L."/>
            <person name="Jiang Y."/>
            <person name="Yan Y."/>
            <person name="Tang X."/>
            <person name="Wang J."/>
            <person name="Xiong Z."/>
            <person name="Dong J."/>
            <person name="Xue Y."/>
            <person name="Zhu Y."/>
            <person name="Xu X."/>
            <person name="Sun L."/>
            <person name="Chen S."/>
            <person name="Nie H."/>
            <person name="Peng J."/>
            <person name="Xu J."/>
            <person name="Wang Y."/>
            <person name="Yuan Z."/>
            <person name="Wen Y."/>
            <person name="Yao Z."/>
            <person name="Shen Y."/>
            <person name="Qiang B."/>
            <person name="Hou Y."/>
            <person name="Yu J."/>
            <person name="Jin Q."/>
        </authorList>
    </citation>
    <scope>NUCLEOTIDE SEQUENCE [LARGE SCALE GENOMIC DNA]</scope>
    <source>
        <strain>Sd197</strain>
    </source>
</reference>